<organism>
    <name type="scientific">Methanocella arvoryzae (strain DSM 22066 / NBRC 105507 / MRE50)</name>
    <dbReference type="NCBI Taxonomy" id="351160"/>
    <lineage>
        <taxon>Archaea</taxon>
        <taxon>Methanobacteriati</taxon>
        <taxon>Methanobacteriota</taxon>
        <taxon>Stenosarchaea group</taxon>
        <taxon>Methanomicrobia</taxon>
        <taxon>Methanocellales</taxon>
        <taxon>Methanocellaceae</taxon>
        <taxon>Methanocella</taxon>
    </lineage>
</organism>
<accession>Q0W2L3</accession>
<keyword id="KW-0648">Protein biosynthesis</keyword>
<keyword id="KW-0663">Pyridoxal phosphate</keyword>
<keyword id="KW-1185">Reference proteome</keyword>
<keyword id="KW-0808">Transferase</keyword>
<protein>
    <recommendedName>
        <fullName evidence="1">O-phospho-L-seryl-tRNA:Cys-tRNA synthase 1</fullName>
        <ecNumber evidence="1">2.5.1.73</ecNumber>
    </recommendedName>
    <alternativeName>
        <fullName evidence="1">Sep-tRNA:Cys-tRNA synthase 1</fullName>
        <shortName evidence="1">SepCysS 1</shortName>
    </alternativeName>
</protein>
<evidence type="ECO:0000255" key="1">
    <source>
        <dbReference type="HAMAP-Rule" id="MF_01675"/>
    </source>
</evidence>
<comment type="function">
    <text evidence="1">Converts O-phospho-L-seryl-tRNA(Cys) (Sep-tRNA(Cys)) to L-cysteinyl-tRNA(Cys) (Cys-tRNA(Cys)).</text>
</comment>
<comment type="catalytic activity">
    <reaction evidence="1">
        <text>O-phospho-L-seryl-tRNA(Cys) + hydrogen sulfide + H(+) = L-cysteinyl-tRNA(Cys) + phosphate</text>
        <dbReference type="Rhea" id="RHEA:25686"/>
        <dbReference type="Rhea" id="RHEA-COMP:9679"/>
        <dbReference type="Rhea" id="RHEA-COMP:9719"/>
        <dbReference type="ChEBI" id="CHEBI:15378"/>
        <dbReference type="ChEBI" id="CHEBI:29919"/>
        <dbReference type="ChEBI" id="CHEBI:43474"/>
        <dbReference type="ChEBI" id="CHEBI:78517"/>
        <dbReference type="ChEBI" id="CHEBI:78551"/>
        <dbReference type="EC" id="2.5.1.73"/>
    </reaction>
</comment>
<comment type="cofactor">
    <cofactor evidence="1">
        <name>pyridoxal 5'-phosphate</name>
        <dbReference type="ChEBI" id="CHEBI:597326"/>
    </cofactor>
</comment>
<comment type="subunit">
    <text evidence="1">Homodimer. Interacts with SepRS.</text>
</comment>
<comment type="similarity">
    <text evidence="1">Belongs to the SepCysS family.</text>
</comment>
<feature type="chain" id="PRO_0000359465" description="O-phospho-L-seryl-tRNA:Cys-tRNA synthase 1">
    <location>
        <begin position="1"/>
        <end position="384"/>
    </location>
</feature>
<feature type="binding site" evidence="1">
    <location>
        <begin position="88"/>
        <end position="89"/>
    </location>
    <ligand>
        <name>pyridoxal 5'-phosphate</name>
        <dbReference type="ChEBI" id="CHEBI:597326"/>
    </ligand>
</feature>
<feature type="binding site" evidence="1">
    <location>
        <position position="195"/>
    </location>
    <ligand>
        <name>pyridoxal 5'-phosphate</name>
        <dbReference type="ChEBI" id="CHEBI:597326"/>
    </ligand>
</feature>
<feature type="binding site" evidence="1">
    <location>
        <begin position="218"/>
        <end position="220"/>
    </location>
    <ligand>
        <name>pyridoxal 5'-phosphate</name>
        <dbReference type="ChEBI" id="CHEBI:597326"/>
    </ligand>
</feature>
<feature type="modified residue" description="N6-(pyridoxal phosphate)lysine" evidence="1">
    <location>
        <position position="221"/>
    </location>
</feature>
<name>SPSS1_METAR</name>
<sequence>MSQDLSLQKFGFIKRDTPRTVNLDPLQTGGLLTPEAREALLEWGDGYSVCDYCGGMLDQIKTPPIFDFVHKSLPSFIGMDHARVTNGARESKFAIMHAMTSPGDWIVMDGNAHYSSIVAAQRARLNVKLVPKTPAPDYKITPEAYAAAIEEVKQQSGKPPALALLTYPDGSYGNLADAKAITNLAHDFGVPIIINGAYAIGRMPFKGKDLGADFVAGSGHKSMAASGPVGVLGVNEQYAAKVLQKSPTHKNKEIEFLGCTARGATIMTMIASFPAVVERTKPESWEKEVSNARWFSEQMESIGMKQLGDKPHNHDLMFFEGTVFYDISQKTDRYFLYRELKEKSIHGIKPGLTKNFKLSTLGVGREKLGFVMDTLKDIIKKYDG</sequence>
<gene>
    <name type="ordered locus">UNCMA_08720</name>
    <name type="ORF">RCIX2270</name>
</gene>
<reference key="1">
    <citation type="journal article" date="2006" name="Science">
        <title>Genome of rice cluster I archaea -- the key methane producers in the rice rhizosphere.</title>
        <authorList>
            <person name="Erkel C."/>
            <person name="Kube M."/>
            <person name="Reinhardt R."/>
            <person name="Liesack W."/>
        </authorList>
    </citation>
    <scope>NUCLEOTIDE SEQUENCE [LARGE SCALE GENOMIC DNA]</scope>
    <source>
        <strain>DSM 22066 / NBRC 105507 / MRE50</strain>
    </source>
</reference>
<proteinExistence type="inferred from homology"/>
<dbReference type="EC" id="2.5.1.73" evidence="1"/>
<dbReference type="EMBL" id="AM114193">
    <property type="protein sequence ID" value="CAJ37380.1"/>
    <property type="molecule type" value="Genomic_DNA"/>
</dbReference>
<dbReference type="RefSeq" id="WP_012035201.1">
    <property type="nucleotide sequence ID" value="NC_009464.1"/>
</dbReference>
<dbReference type="SMR" id="Q0W2L3"/>
<dbReference type="STRING" id="351160.RCIX2270"/>
<dbReference type="GeneID" id="5145435"/>
<dbReference type="KEGG" id="rci:RCIX2270"/>
<dbReference type="PATRIC" id="fig|351160.9.peg.903"/>
<dbReference type="eggNOG" id="arCOG00091">
    <property type="taxonomic scope" value="Archaea"/>
</dbReference>
<dbReference type="OrthoDB" id="5817at2157"/>
<dbReference type="Proteomes" id="UP000000663">
    <property type="component" value="Chromosome"/>
</dbReference>
<dbReference type="GO" id="GO:0043766">
    <property type="term" value="F:Sep-tRNA:Cys-tRNA synthase activity"/>
    <property type="evidence" value="ECO:0007669"/>
    <property type="project" value="UniProtKB-UniRule"/>
</dbReference>
<dbReference type="GO" id="GO:0006412">
    <property type="term" value="P:translation"/>
    <property type="evidence" value="ECO:0007669"/>
    <property type="project" value="UniProtKB-KW"/>
</dbReference>
<dbReference type="Gene3D" id="3.90.1150.10">
    <property type="entry name" value="Aspartate Aminotransferase, domain 1"/>
    <property type="match status" value="1"/>
</dbReference>
<dbReference type="Gene3D" id="3.40.640.10">
    <property type="entry name" value="Type I PLP-dependent aspartate aminotransferase-like (Major domain)"/>
    <property type="match status" value="1"/>
</dbReference>
<dbReference type="HAMAP" id="MF_01675">
    <property type="entry name" value="Sep_Cys_tRNA_synth"/>
    <property type="match status" value="1"/>
</dbReference>
<dbReference type="InterPro" id="IPR015424">
    <property type="entry name" value="PyrdxlP-dep_Trfase"/>
</dbReference>
<dbReference type="InterPro" id="IPR015421">
    <property type="entry name" value="PyrdxlP-dep_Trfase_major"/>
</dbReference>
<dbReference type="InterPro" id="IPR015422">
    <property type="entry name" value="PyrdxlP-dep_Trfase_small"/>
</dbReference>
<dbReference type="InterPro" id="IPR013375">
    <property type="entry name" value="Sep_Cys-tRNA_synth_arc"/>
</dbReference>
<dbReference type="InterPro" id="IPR008829">
    <property type="entry name" value="SepSecS/SepCysS"/>
</dbReference>
<dbReference type="NCBIfam" id="NF006810">
    <property type="entry name" value="PRK09331.1"/>
    <property type="match status" value="1"/>
</dbReference>
<dbReference type="NCBIfam" id="TIGR02539">
    <property type="entry name" value="SepCysS"/>
    <property type="match status" value="1"/>
</dbReference>
<dbReference type="PANTHER" id="PTHR43586">
    <property type="entry name" value="CYSTEINE DESULFURASE"/>
    <property type="match status" value="1"/>
</dbReference>
<dbReference type="PANTHER" id="PTHR43586:SF3">
    <property type="entry name" value="O-PHOSPHO-L-SERYL-TRNA:CYS-TRNA SYNTHASE"/>
    <property type="match status" value="1"/>
</dbReference>
<dbReference type="Pfam" id="PF05889">
    <property type="entry name" value="SepSecS"/>
    <property type="match status" value="1"/>
</dbReference>
<dbReference type="SUPFAM" id="SSF53383">
    <property type="entry name" value="PLP-dependent transferases"/>
    <property type="match status" value="1"/>
</dbReference>